<feature type="chain" id="PRO_0000120694" description="NAD kinase">
    <location>
        <begin position="1"/>
        <end position="259"/>
    </location>
</feature>
<feature type="active site" description="Proton acceptor" evidence="1">
    <location>
        <position position="49"/>
    </location>
</feature>
<feature type="binding site" evidence="1">
    <location>
        <begin position="49"/>
        <end position="50"/>
    </location>
    <ligand>
        <name>NAD(+)</name>
        <dbReference type="ChEBI" id="CHEBI:57540"/>
    </ligand>
</feature>
<feature type="binding site" evidence="1">
    <location>
        <position position="54"/>
    </location>
    <ligand>
        <name>NAD(+)</name>
        <dbReference type="ChEBI" id="CHEBI:57540"/>
    </ligand>
</feature>
<feature type="binding site" evidence="1">
    <location>
        <begin position="118"/>
        <end position="119"/>
    </location>
    <ligand>
        <name>NAD(+)</name>
        <dbReference type="ChEBI" id="CHEBI:57540"/>
    </ligand>
</feature>
<feature type="binding site" evidence="1">
    <location>
        <position position="148"/>
    </location>
    <ligand>
        <name>NAD(+)</name>
        <dbReference type="ChEBI" id="CHEBI:57540"/>
    </ligand>
</feature>
<feature type="binding site" evidence="1">
    <location>
        <position position="156"/>
    </location>
    <ligand>
        <name>NAD(+)</name>
        <dbReference type="ChEBI" id="CHEBI:57540"/>
    </ligand>
</feature>
<feature type="binding site" evidence="1">
    <location>
        <begin position="159"/>
        <end position="164"/>
    </location>
    <ligand>
        <name>NAD(+)</name>
        <dbReference type="ChEBI" id="CHEBI:57540"/>
    </ligand>
</feature>
<feature type="binding site" evidence="1">
    <location>
        <position position="183"/>
    </location>
    <ligand>
        <name>NAD(+)</name>
        <dbReference type="ChEBI" id="CHEBI:57540"/>
    </ligand>
</feature>
<organism>
    <name type="scientific">Xylella fastidiosa (strain Temecula1 / ATCC 700964)</name>
    <dbReference type="NCBI Taxonomy" id="183190"/>
    <lineage>
        <taxon>Bacteria</taxon>
        <taxon>Pseudomonadati</taxon>
        <taxon>Pseudomonadota</taxon>
        <taxon>Gammaproteobacteria</taxon>
        <taxon>Lysobacterales</taxon>
        <taxon>Lysobacteraceae</taxon>
        <taxon>Xylella</taxon>
    </lineage>
</organism>
<accession>Q87DA0</accession>
<protein>
    <recommendedName>
        <fullName evidence="1">NAD kinase</fullName>
        <ecNumber evidence="1">2.7.1.23</ecNumber>
    </recommendedName>
    <alternativeName>
        <fullName evidence="1">ATP-dependent NAD kinase</fullName>
    </alternativeName>
</protein>
<name>NADK_XYLFT</name>
<sequence length="259" mass="28840">MEMMMTAAPRIAFLASTAEPAQRARQELMARYGDCSIEEADVLCALGGDGFMLRTLHRHGASGKPVYGMKLGSVGFLMNQYHDDLLERLQRAEPAKLRPLQMMAQTESGVSVESLAYNEVSLLRQTHQAAYISIDLNGQTRIDELTGDGVIVATPAGSTAYNYSAHGPILPLGSHTLALTPIAPYRPRRWRGAILKADTEIRLRVLDPYKRPVSVTADSHEIRDVVEVTIRESTEQRVTLLFDPEHNLEERIFSEQFAF</sequence>
<evidence type="ECO:0000255" key="1">
    <source>
        <dbReference type="HAMAP-Rule" id="MF_00361"/>
    </source>
</evidence>
<keyword id="KW-0067">ATP-binding</keyword>
<keyword id="KW-0963">Cytoplasm</keyword>
<keyword id="KW-0418">Kinase</keyword>
<keyword id="KW-0520">NAD</keyword>
<keyword id="KW-0521">NADP</keyword>
<keyword id="KW-0547">Nucleotide-binding</keyword>
<keyword id="KW-1185">Reference proteome</keyword>
<keyword id="KW-0808">Transferase</keyword>
<proteinExistence type="inferred from homology"/>
<comment type="function">
    <text evidence="1">Involved in the regulation of the intracellular balance of NAD and NADP, and is a key enzyme in the biosynthesis of NADP. Catalyzes specifically the phosphorylation on 2'-hydroxyl of the adenosine moiety of NAD to yield NADP.</text>
</comment>
<comment type="catalytic activity">
    <reaction evidence="1">
        <text>NAD(+) + ATP = ADP + NADP(+) + H(+)</text>
        <dbReference type="Rhea" id="RHEA:18629"/>
        <dbReference type="ChEBI" id="CHEBI:15378"/>
        <dbReference type="ChEBI" id="CHEBI:30616"/>
        <dbReference type="ChEBI" id="CHEBI:57540"/>
        <dbReference type="ChEBI" id="CHEBI:58349"/>
        <dbReference type="ChEBI" id="CHEBI:456216"/>
        <dbReference type="EC" id="2.7.1.23"/>
    </reaction>
</comment>
<comment type="cofactor">
    <cofactor evidence="1">
        <name>a divalent metal cation</name>
        <dbReference type="ChEBI" id="CHEBI:60240"/>
    </cofactor>
</comment>
<comment type="subcellular location">
    <subcellularLocation>
        <location evidence="1">Cytoplasm</location>
    </subcellularLocation>
</comment>
<comment type="similarity">
    <text evidence="1">Belongs to the NAD kinase family.</text>
</comment>
<dbReference type="EC" id="2.7.1.23" evidence="1"/>
<dbReference type="EMBL" id="AE009442">
    <property type="protein sequence ID" value="AAO28654.1"/>
    <property type="molecule type" value="Genomic_DNA"/>
</dbReference>
<dbReference type="SMR" id="Q87DA0"/>
<dbReference type="KEGG" id="xft:PD_0786"/>
<dbReference type="HOGENOM" id="CLU_073319_0_0_6"/>
<dbReference type="Proteomes" id="UP000002516">
    <property type="component" value="Chromosome"/>
</dbReference>
<dbReference type="GO" id="GO:0005737">
    <property type="term" value="C:cytoplasm"/>
    <property type="evidence" value="ECO:0007669"/>
    <property type="project" value="UniProtKB-SubCell"/>
</dbReference>
<dbReference type="GO" id="GO:0005524">
    <property type="term" value="F:ATP binding"/>
    <property type="evidence" value="ECO:0007669"/>
    <property type="project" value="UniProtKB-KW"/>
</dbReference>
<dbReference type="GO" id="GO:0046872">
    <property type="term" value="F:metal ion binding"/>
    <property type="evidence" value="ECO:0007669"/>
    <property type="project" value="UniProtKB-UniRule"/>
</dbReference>
<dbReference type="GO" id="GO:0051287">
    <property type="term" value="F:NAD binding"/>
    <property type="evidence" value="ECO:0007669"/>
    <property type="project" value="UniProtKB-ARBA"/>
</dbReference>
<dbReference type="GO" id="GO:0003951">
    <property type="term" value="F:NAD+ kinase activity"/>
    <property type="evidence" value="ECO:0007669"/>
    <property type="project" value="UniProtKB-UniRule"/>
</dbReference>
<dbReference type="GO" id="GO:0019674">
    <property type="term" value="P:NAD metabolic process"/>
    <property type="evidence" value="ECO:0007669"/>
    <property type="project" value="InterPro"/>
</dbReference>
<dbReference type="GO" id="GO:0006741">
    <property type="term" value="P:NADP biosynthetic process"/>
    <property type="evidence" value="ECO:0007669"/>
    <property type="project" value="UniProtKB-UniRule"/>
</dbReference>
<dbReference type="FunFam" id="2.60.200.30:FF:000012">
    <property type="entry name" value="NAD kinase"/>
    <property type="match status" value="1"/>
</dbReference>
<dbReference type="Gene3D" id="3.40.50.10330">
    <property type="entry name" value="Probable inorganic polyphosphate/atp-NAD kinase, domain 1"/>
    <property type="match status" value="1"/>
</dbReference>
<dbReference type="Gene3D" id="2.60.200.30">
    <property type="entry name" value="Probable inorganic polyphosphate/atp-NAD kinase, domain 2"/>
    <property type="match status" value="1"/>
</dbReference>
<dbReference type="HAMAP" id="MF_00361">
    <property type="entry name" value="NAD_kinase"/>
    <property type="match status" value="1"/>
</dbReference>
<dbReference type="InterPro" id="IPR017438">
    <property type="entry name" value="ATP-NAD_kinase_N"/>
</dbReference>
<dbReference type="InterPro" id="IPR017437">
    <property type="entry name" value="ATP-NAD_kinase_PpnK-typ_C"/>
</dbReference>
<dbReference type="InterPro" id="IPR016064">
    <property type="entry name" value="NAD/diacylglycerol_kinase_sf"/>
</dbReference>
<dbReference type="InterPro" id="IPR002504">
    <property type="entry name" value="NADK"/>
</dbReference>
<dbReference type="NCBIfam" id="NF003406">
    <property type="entry name" value="PRK04761.1"/>
    <property type="match status" value="1"/>
</dbReference>
<dbReference type="PANTHER" id="PTHR20275">
    <property type="entry name" value="NAD KINASE"/>
    <property type="match status" value="1"/>
</dbReference>
<dbReference type="PANTHER" id="PTHR20275:SF0">
    <property type="entry name" value="NAD KINASE"/>
    <property type="match status" value="1"/>
</dbReference>
<dbReference type="Pfam" id="PF20143">
    <property type="entry name" value="NAD_kinase_C"/>
    <property type="match status" value="1"/>
</dbReference>
<dbReference type="SUPFAM" id="SSF111331">
    <property type="entry name" value="NAD kinase/diacylglycerol kinase-like"/>
    <property type="match status" value="1"/>
</dbReference>
<gene>
    <name evidence="1" type="primary">nadK</name>
    <name type="ordered locus">PD_0786</name>
</gene>
<reference key="1">
    <citation type="journal article" date="2003" name="J. Bacteriol.">
        <title>Comparative analyses of the complete genome sequences of Pierce's disease and citrus variegated chlorosis strains of Xylella fastidiosa.</title>
        <authorList>
            <person name="Van Sluys M.A."/>
            <person name="de Oliveira M.C."/>
            <person name="Monteiro-Vitorello C.B."/>
            <person name="Miyaki C.Y."/>
            <person name="Furlan L.R."/>
            <person name="Camargo L.E.A."/>
            <person name="da Silva A.C.R."/>
            <person name="Moon D.H."/>
            <person name="Takita M.A."/>
            <person name="Lemos E.G.M."/>
            <person name="Machado M.A."/>
            <person name="Ferro M.I.T."/>
            <person name="da Silva F.R."/>
            <person name="Goldman M.H.S."/>
            <person name="Goldman G.H."/>
            <person name="Lemos M.V.F."/>
            <person name="El-Dorry H."/>
            <person name="Tsai S.M."/>
            <person name="Carrer H."/>
            <person name="Carraro D.M."/>
            <person name="de Oliveira R.C."/>
            <person name="Nunes L.R."/>
            <person name="Siqueira W.J."/>
            <person name="Coutinho L.L."/>
            <person name="Kimura E.T."/>
            <person name="Ferro E.S."/>
            <person name="Harakava R."/>
            <person name="Kuramae E.E."/>
            <person name="Marino C.L."/>
            <person name="Giglioti E."/>
            <person name="Abreu I.L."/>
            <person name="Alves L.M.C."/>
            <person name="do Amaral A.M."/>
            <person name="Baia G.S."/>
            <person name="Blanco S.R."/>
            <person name="Brito M.S."/>
            <person name="Cannavan F.S."/>
            <person name="Celestino A.V."/>
            <person name="da Cunha A.F."/>
            <person name="Fenille R.C."/>
            <person name="Ferro J.A."/>
            <person name="Formighieri E.F."/>
            <person name="Kishi L.T."/>
            <person name="Leoni S.G."/>
            <person name="Oliveira A.R."/>
            <person name="Rosa V.E. Jr."/>
            <person name="Sassaki F.T."/>
            <person name="Sena J.A.D."/>
            <person name="de Souza A.A."/>
            <person name="Truffi D."/>
            <person name="Tsukumo F."/>
            <person name="Yanai G.M."/>
            <person name="Zaros L.G."/>
            <person name="Civerolo E.L."/>
            <person name="Simpson A.J.G."/>
            <person name="Almeida N.F. Jr."/>
            <person name="Setubal J.C."/>
            <person name="Kitajima J.P."/>
        </authorList>
    </citation>
    <scope>NUCLEOTIDE SEQUENCE [LARGE SCALE GENOMIC DNA]</scope>
    <source>
        <strain>Temecula1 / ATCC 700964</strain>
    </source>
</reference>